<name>PHRF1_MOUSE</name>
<dbReference type="EMBL" id="AC108908">
    <property type="status" value="NOT_ANNOTATED_CDS"/>
    <property type="molecule type" value="Genomic_DNA"/>
</dbReference>
<dbReference type="EMBL" id="AC163434">
    <property type="status" value="NOT_ANNOTATED_CDS"/>
    <property type="molecule type" value="Genomic_DNA"/>
</dbReference>
<dbReference type="EMBL" id="BC094566">
    <property type="protein sequence ID" value="AAH94566.1"/>
    <property type="molecule type" value="mRNA"/>
</dbReference>
<dbReference type="EMBL" id="BC138446">
    <property type="protein sequence ID" value="AAI38447.1"/>
    <property type="molecule type" value="mRNA"/>
</dbReference>
<dbReference type="EMBL" id="BC145719">
    <property type="protein sequence ID" value="AAI45720.1"/>
    <property type="molecule type" value="mRNA"/>
</dbReference>
<dbReference type="EMBL" id="AK129387">
    <property type="protein sequence ID" value="BAC98197.1"/>
    <property type="status" value="ALT_SEQ"/>
    <property type="molecule type" value="Transcribed_RNA"/>
</dbReference>
<dbReference type="CCDS" id="CCDS52441.1">
    <molecule id="A6H619-1"/>
</dbReference>
<dbReference type="RefSeq" id="NP_001074587.1">
    <molecule id="A6H619-1"/>
    <property type="nucleotide sequence ID" value="NM_001081118.2"/>
</dbReference>
<dbReference type="RefSeq" id="XP_036008402.1">
    <molecule id="A6H619-1"/>
    <property type="nucleotide sequence ID" value="XM_036152509.1"/>
</dbReference>
<dbReference type="SMR" id="A6H619"/>
<dbReference type="FunCoup" id="A6H619">
    <property type="interactions" value="3195"/>
</dbReference>
<dbReference type="IntAct" id="A6H619">
    <property type="interactions" value="1"/>
</dbReference>
<dbReference type="STRING" id="10090.ENSMUSP00000101648"/>
<dbReference type="GlyGen" id="A6H619">
    <property type="glycosylation" value="2 sites, 1 O-linked glycan (2 sites)"/>
</dbReference>
<dbReference type="iPTMnet" id="A6H619"/>
<dbReference type="PhosphoSitePlus" id="A6H619"/>
<dbReference type="jPOST" id="A6H619"/>
<dbReference type="PaxDb" id="10090-ENSMUSP00000101648"/>
<dbReference type="PeptideAtlas" id="A6H619"/>
<dbReference type="ProteomicsDB" id="289744">
    <molecule id="A6H619-1"/>
</dbReference>
<dbReference type="ProteomicsDB" id="289745">
    <molecule id="A6H619-2"/>
</dbReference>
<dbReference type="Antibodypedia" id="5345">
    <property type="antibodies" value="23 antibodies from 11 providers"/>
</dbReference>
<dbReference type="Ensembl" id="ENSMUST00000106027.9">
    <molecule id="A6H619-1"/>
    <property type="protein sequence ID" value="ENSMUSP00000101648.3"/>
    <property type="gene ID" value="ENSMUSG00000038611.18"/>
</dbReference>
<dbReference type="Ensembl" id="ENSMUST00000122143.8">
    <molecule id="A6H619-2"/>
    <property type="protein sequence ID" value="ENSMUSP00000113195.2"/>
    <property type="gene ID" value="ENSMUSG00000038611.18"/>
</dbReference>
<dbReference type="GeneID" id="101471"/>
<dbReference type="KEGG" id="mmu:101471"/>
<dbReference type="UCSC" id="uc009kkb.1">
    <molecule id="A6H619-1"/>
    <property type="organism name" value="mouse"/>
</dbReference>
<dbReference type="UCSC" id="uc009kkc.1">
    <molecule id="A6H619-2"/>
    <property type="organism name" value="mouse"/>
</dbReference>
<dbReference type="AGR" id="MGI:2141847"/>
<dbReference type="CTD" id="57661"/>
<dbReference type="MGI" id="MGI:2141847">
    <property type="gene designation" value="Phrf1"/>
</dbReference>
<dbReference type="VEuPathDB" id="HostDB:ENSMUSG00000038611"/>
<dbReference type="eggNOG" id="KOG0825">
    <property type="taxonomic scope" value="Eukaryota"/>
</dbReference>
<dbReference type="GeneTree" id="ENSGT00950000183205"/>
<dbReference type="HOGENOM" id="CLU_003222_0_0_1"/>
<dbReference type="InParanoid" id="A6H619"/>
<dbReference type="OMA" id="VENTRAC"/>
<dbReference type="OrthoDB" id="1935339at2759"/>
<dbReference type="PhylomeDB" id="A6H619"/>
<dbReference type="TreeFam" id="TF332183"/>
<dbReference type="BioGRID-ORCS" id="101471">
    <property type="hits" value="2 hits in 81 CRISPR screens"/>
</dbReference>
<dbReference type="ChiTaRS" id="Phrf1">
    <property type="organism name" value="mouse"/>
</dbReference>
<dbReference type="PRO" id="PR:A6H619"/>
<dbReference type="Proteomes" id="UP000000589">
    <property type="component" value="Chromosome 7"/>
</dbReference>
<dbReference type="RNAct" id="A6H619">
    <property type="molecule type" value="protein"/>
</dbReference>
<dbReference type="Bgee" id="ENSMUSG00000038611">
    <property type="expression patterns" value="Expressed in manus and 215 other cell types or tissues"/>
</dbReference>
<dbReference type="ExpressionAtlas" id="A6H619">
    <property type="expression patterns" value="baseline and differential"/>
</dbReference>
<dbReference type="GO" id="GO:0070063">
    <property type="term" value="F:RNA polymerase binding"/>
    <property type="evidence" value="ECO:0000250"/>
    <property type="project" value="UniProtKB"/>
</dbReference>
<dbReference type="GO" id="GO:0008270">
    <property type="term" value="F:zinc ion binding"/>
    <property type="evidence" value="ECO:0007669"/>
    <property type="project" value="UniProtKB-KW"/>
</dbReference>
<dbReference type="CDD" id="cd16635">
    <property type="entry name" value="mRING-HC-C3HC3D_PHRF1"/>
    <property type="match status" value="1"/>
</dbReference>
<dbReference type="CDD" id="cd15536">
    <property type="entry name" value="PHD_PHRF1"/>
    <property type="match status" value="1"/>
</dbReference>
<dbReference type="FunFam" id="3.30.40.10:FF:000526">
    <property type="entry name" value="PHD and ring finger domains 1"/>
    <property type="match status" value="1"/>
</dbReference>
<dbReference type="Gene3D" id="3.30.40.10">
    <property type="entry name" value="Zinc/RING finger domain, C3HC4 (zinc finger)"/>
    <property type="match status" value="2"/>
</dbReference>
<dbReference type="InterPro" id="IPR047157">
    <property type="entry name" value="PHRF1/Atg35"/>
</dbReference>
<dbReference type="InterPro" id="IPR057031">
    <property type="entry name" value="SCAF11-like_C"/>
</dbReference>
<dbReference type="InterPro" id="IPR011011">
    <property type="entry name" value="Znf_FYVE_PHD"/>
</dbReference>
<dbReference type="InterPro" id="IPR001965">
    <property type="entry name" value="Znf_PHD"/>
</dbReference>
<dbReference type="InterPro" id="IPR019787">
    <property type="entry name" value="Znf_PHD-finger"/>
</dbReference>
<dbReference type="InterPro" id="IPR001841">
    <property type="entry name" value="Znf_RING"/>
</dbReference>
<dbReference type="InterPro" id="IPR013083">
    <property type="entry name" value="Znf_RING/FYVE/PHD"/>
</dbReference>
<dbReference type="InterPro" id="IPR017907">
    <property type="entry name" value="Znf_RING_CS"/>
</dbReference>
<dbReference type="PANTHER" id="PTHR12618">
    <property type="entry name" value="PHD AND RING FINGER DOMAIN-CONTAINING PROTEIN 1"/>
    <property type="match status" value="1"/>
</dbReference>
<dbReference type="PANTHER" id="PTHR12618:SF20">
    <property type="entry name" value="PHD AND RING FINGER DOMAIN-CONTAINING PROTEIN 1"/>
    <property type="match status" value="1"/>
</dbReference>
<dbReference type="Pfam" id="PF00628">
    <property type="entry name" value="PHD"/>
    <property type="match status" value="1"/>
</dbReference>
<dbReference type="Pfam" id="PF23030">
    <property type="entry name" value="SCAF11-like_C"/>
    <property type="match status" value="1"/>
</dbReference>
<dbReference type="Pfam" id="PF13639">
    <property type="entry name" value="zf-RING_2"/>
    <property type="match status" value="1"/>
</dbReference>
<dbReference type="SMART" id="SM00249">
    <property type="entry name" value="PHD"/>
    <property type="match status" value="1"/>
</dbReference>
<dbReference type="SMART" id="SM00184">
    <property type="entry name" value="RING"/>
    <property type="match status" value="2"/>
</dbReference>
<dbReference type="SUPFAM" id="SSF57903">
    <property type="entry name" value="FYVE/PHD zinc finger"/>
    <property type="match status" value="1"/>
</dbReference>
<dbReference type="SUPFAM" id="SSF57850">
    <property type="entry name" value="RING/U-box"/>
    <property type="match status" value="1"/>
</dbReference>
<dbReference type="PROSITE" id="PS01359">
    <property type="entry name" value="ZF_PHD_1"/>
    <property type="match status" value="1"/>
</dbReference>
<dbReference type="PROSITE" id="PS50016">
    <property type="entry name" value="ZF_PHD_2"/>
    <property type="match status" value="1"/>
</dbReference>
<dbReference type="PROSITE" id="PS00518">
    <property type="entry name" value="ZF_RING_1"/>
    <property type="match status" value="1"/>
</dbReference>
<dbReference type="PROSITE" id="PS50089">
    <property type="entry name" value="ZF_RING_2"/>
    <property type="match status" value="1"/>
</dbReference>
<feature type="chain" id="PRO_0000354662" description="PHD and RING finger domain-containing protein 1">
    <location>
        <begin position="1"/>
        <end position="1682"/>
    </location>
</feature>
<feature type="zinc finger region" description="RING-type; degenerate" evidence="5">
    <location>
        <begin position="109"/>
        <end position="150"/>
    </location>
</feature>
<feature type="zinc finger region" description="PHD-type" evidence="4">
    <location>
        <begin position="185"/>
        <end position="235"/>
    </location>
</feature>
<feature type="region of interest" description="Disordered" evidence="6">
    <location>
        <begin position="1"/>
        <end position="81"/>
    </location>
</feature>
<feature type="region of interest" description="Disordered" evidence="6">
    <location>
        <begin position="330"/>
        <end position="412"/>
    </location>
</feature>
<feature type="region of interest" description="Disordered" evidence="6">
    <location>
        <begin position="444"/>
        <end position="483"/>
    </location>
</feature>
<feature type="region of interest" description="Disordered" evidence="6">
    <location>
        <begin position="532"/>
        <end position="582"/>
    </location>
</feature>
<feature type="region of interest" description="Disordered" evidence="6">
    <location>
        <begin position="605"/>
        <end position="774"/>
    </location>
</feature>
<feature type="region of interest" description="Disordered" evidence="6">
    <location>
        <begin position="825"/>
        <end position="856"/>
    </location>
</feature>
<feature type="region of interest" description="Disordered" evidence="6">
    <location>
        <begin position="911"/>
        <end position="1225"/>
    </location>
</feature>
<feature type="region of interest" description="Disordered" evidence="6">
    <location>
        <begin position="1288"/>
        <end position="1322"/>
    </location>
</feature>
<feature type="region of interest" description="Disordered" evidence="6">
    <location>
        <begin position="1419"/>
        <end position="1445"/>
    </location>
</feature>
<feature type="region of interest" description="Disordered" evidence="6">
    <location>
        <begin position="1463"/>
        <end position="1496"/>
    </location>
</feature>
<feature type="region of interest" description="Disordered" evidence="6">
    <location>
        <begin position="1567"/>
        <end position="1588"/>
    </location>
</feature>
<feature type="region of interest" description="Disordered" evidence="6">
    <location>
        <begin position="1663"/>
        <end position="1682"/>
    </location>
</feature>
<feature type="coiled-coil region" evidence="3">
    <location>
        <begin position="1585"/>
        <end position="1612"/>
    </location>
</feature>
<feature type="compositionally biased region" description="Acidic residues" evidence="6">
    <location>
        <begin position="41"/>
        <end position="81"/>
    </location>
</feature>
<feature type="compositionally biased region" description="Basic residues" evidence="6">
    <location>
        <begin position="336"/>
        <end position="361"/>
    </location>
</feature>
<feature type="compositionally biased region" description="Basic residues" evidence="6">
    <location>
        <begin position="369"/>
        <end position="384"/>
    </location>
</feature>
<feature type="compositionally biased region" description="Polar residues" evidence="6">
    <location>
        <begin position="609"/>
        <end position="620"/>
    </location>
</feature>
<feature type="compositionally biased region" description="Polar residues" evidence="6">
    <location>
        <begin position="630"/>
        <end position="667"/>
    </location>
</feature>
<feature type="compositionally biased region" description="Polar residues" evidence="6">
    <location>
        <begin position="734"/>
        <end position="748"/>
    </location>
</feature>
<feature type="compositionally biased region" description="Low complexity" evidence="6">
    <location>
        <begin position="832"/>
        <end position="856"/>
    </location>
</feature>
<feature type="compositionally biased region" description="Acidic residues" evidence="6">
    <location>
        <begin position="919"/>
        <end position="931"/>
    </location>
</feature>
<feature type="compositionally biased region" description="Low complexity" evidence="6">
    <location>
        <begin position="999"/>
        <end position="1008"/>
    </location>
</feature>
<feature type="compositionally biased region" description="Basic residues" evidence="6">
    <location>
        <begin position="1009"/>
        <end position="1030"/>
    </location>
</feature>
<feature type="compositionally biased region" description="Basic residues" evidence="6">
    <location>
        <begin position="1053"/>
        <end position="1063"/>
    </location>
</feature>
<feature type="compositionally biased region" description="Basic and acidic residues" evidence="6">
    <location>
        <begin position="1064"/>
        <end position="1090"/>
    </location>
</feature>
<feature type="compositionally biased region" description="Basic residues" evidence="6">
    <location>
        <begin position="1091"/>
        <end position="1104"/>
    </location>
</feature>
<feature type="compositionally biased region" description="Basic residues" evidence="6">
    <location>
        <begin position="1119"/>
        <end position="1129"/>
    </location>
</feature>
<feature type="compositionally biased region" description="Basic and acidic residues" evidence="6">
    <location>
        <begin position="1147"/>
        <end position="1161"/>
    </location>
</feature>
<feature type="compositionally biased region" description="Basic and acidic residues" evidence="6">
    <location>
        <begin position="1182"/>
        <end position="1197"/>
    </location>
</feature>
<feature type="compositionally biased region" description="Low complexity" evidence="6">
    <location>
        <begin position="1288"/>
        <end position="1301"/>
    </location>
</feature>
<feature type="compositionally biased region" description="Pro residues" evidence="6">
    <location>
        <begin position="1308"/>
        <end position="1317"/>
    </location>
</feature>
<feature type="compositionally biased region" description="Basic and acidic residues" evidence="6">
    <location>
        <begin position="1574"/>
        <end position="1588"/>
    </location>
</feature>
<feature type="modified residue" description="Phosphothreonine" evidence="2">
    <location>
        <position position="332"/>
    </location>
</feature>
<feature type="modified residue" description="Phosphoserine" evidence="1">
    <location>
        <position position="447"/>
    </location>
</feature>
<feature type="modified residue" description="Phosphoserine" evidence="2">
    <location>
        <position position="457"/>
    </location>
</feature>
<feature type="modified residue" description="Phosphoserine" evidence="2">
    <location>
        <position position="845"/>
    </location>
</feature>
<feature type="modified residue" description="Phosphoserine" evidence="2">
    <location>
        <position position="846"/>
    </location>
</feature>
<feature type="modified residue" description="Phosphoserine" evidence="2">
    <location>
        <position position="864"/>
    </location>
</feature>
<feature type="modified residue" description="Phosphoserine" evidence="2">
    <location>
        <position position="867"/>
    </location>
</feature>
<feature type="modified residue" description="Phosphoserine" evidence="14">
    <location>
        <position position="919"/>
    </location>
</feature>
<feature type="modified residue" description="Phosphoserine" evidence="2">
    <location>
        <position position="982"/>
    </location>
</feature>
<feature type="modified residue" description="Phosphoserine" evidence="2">
    <location>
        <position position="1000"/>
    </location>
</feature>
<feature type="modified residue" description="Phosphoserine" evidence="2">
    <location>
        <position position="1135"/>
    </location>
</feature>
<feature type="modified residue" description="Phosphoserine" evidence="2">
    <location>
        <position position="1201"/>
    </location>
</feature>
<feature type="modified residue" description="Phosphoserine" evidence="2">
    <location>
        <position position="1368"/>
    </location>
</feature>
<feature type="modified residue" description="Phosphoserine" evidence="2">
    <location>
        <position position="1379"/>
    </location>
</feature>
<feature type="modified residue" description="Phosphothreonine" evidence="2">
    <location>
        <position position="1412"/>
    </location>
</feature>
<feature type="splice variant" id="VSP_052978" description="In isoform 2." evidence="8">
    <location>
        <begin position="1"/>
        <end position="159"/>
    </location>
</feature>
<feature type="splice variant" id="VSP_052979" description="In isoform 2." evidence="8">
    <original>AQFNGKILKK</original>
    <variation>MFTDQYFCLQ</variation>
    <location>
        <begin position="160"/>
        <end position="169"/>
    </location>
</feature>
<sequence length="1682" mass="184081">MDDDNLDELVAHSPGPDGPPRVGSSELASDAEESSNGQSGDSEDDTGSEQDDDTDGEETEGLSEEEDPEDRSGSEDSEDGVEMATAAIETQGKLEASSVPNSDDDAESCPICLNAFRDQAVGTPETCAHYFCLDCIIEWSRNANSCPVDRTVFKCICIRAQFNGKILKKIPVENTKACEAEEEDPTFCEVCGRSDREDRLLLCDGCDAGYHMECLDPPLQEVPVDEWFCPECTVPGVDPTHDAAPVSDEEVSLLLADVVPTTSRLRPRVGRTRAIARTRQSERVRATVNRNRISSARRVQHVPRYLMSSLLDETIEAVATGLSTAVYQRPLTPRVPAKRKRKAGRRKKVLGRKKTRSRSSVKSKSGSTRAKKRQHRVRKTKGRKLKNEVTARSRIARTLGLRRPVRGTSMPSVYKPVDPSLGLMRADIGAASLSLFGDPYELDPFDSNEEQSADPPSPLSAKRRVLSRSALQSHQPVARPVAMGLSRRQLPAVAPEPSVEEAPVPDLLGSILSGQSLLMMSSADVVIHRDGSLSAKRAAPVSLQRNSVTQSREESRLRDNPQPGALPSESASGGFVGDRQPNSGLSCGNRTALCCLPARIAQTPVRSDPSLTPRSGLSRTLSDENRPSRTHSSSPQLNGSNVRVSSASTKIVTHSSFPSKNTASGLPQRTGPRRPDFSKLPRIPKIHRDGNKSTQDQAPASGHIVELPSTCISRLTGREGPGQPGRGRVDSEPSSRGPQETGSHTSGSRPPAPSSHGSLAHLGPSRGKGIGSSFESFRINIPGNTAHCSQLSSPGFCNTFRPVDSKVQRKETPFPLFSIKKPKQLKSEIYDPFDPTGSDSSPPSSSPESLGPGLLPSEITRTISINSPKAPAFQTVRCVTSYRVESIFGTEMEPEPQPPSEPVSGMLELLSKGSAEGTSDLEQEGLGEIEPTEIRGSTARTQRPPPPDPWDDEDEVSCTPFFGSEERTVTCVTVEEPGVLPSPDAPQITTHRIVEFRASSRSRSTSSSRSRKKTKKKKKKVAREHQRTRSSTRSGSRDRTSRSVSPVAEEHTRRHRAKTKSRRSSSDRASSQDRAKRRKDRDDRDREHRRGSWGHGRCRRKSRSRSGSPGSSSCERHESKRRKRRHSGSRSRGSSLERDRRHKHRERSRERMDKQESVTRSRERRRWRSRSPSLEHRPRRPPSREKRAHSPEKKGPVREVSPAPATQGESRQDGDHSAEPPVSEVSVLPEVVSVLPEVVVADLNPPEVPPVLAEPVAHVPEDLDYGESVEAGHVFEDFSNEAIFIQLDDMSSPPSPESTDSSPERDFPPNPILPPASLPQDSTLPTIQREVLPIHSEDISKPVPQALAPSDQSLLKQDTVEITTTTPSTPAVVPMTKDSPVLSARGWEAVRPRDAVAQAPLLRSRTLVKRVTWNLQEAEHSTPAALDRDPRTPLQRPQRPQEGDWDAEDRALIGFQQAPFSELPPPIHVLQESGLPDADPSQPPGAPRAEGLPAAGTLHSAGGILAQVYSPNMPPPLAQPSSILPYALVSQPSVQLILQGTLPLAGCGTAQSLAPVPTMPATVSELAVPTTNNSEERTATPKTAAEKTKKEEYMKKLHMQERAVEEVKLAIKPFYQKREVTKEEYKDILRKAVQKICHSKSGEINPVKVANLVKAYVDKYRHMRRHKKTEGGEEPPTQGAET</sequence>
<comment type="subunit">
    <text evidence="1">Interacts with POLR2A (via the C-terminal domain).</text>
</comment>
<comment type="alternative products">
    <event type="alternative splicing"/>
    <isoform>
        <id>A6H619-1</id>
        <name evidence="9">1</name>
        <sequence type="displayed"/>
    </isoform>
    <isoform>
        <id>A6H619-2</id>
        <name evidence="7">2</name>
        <sequence type="described" ref="VSP_052978 VSP_052979"/>
    </isoform>
</comment>
<comment type="sequence caution" evidence="9">
    <conflict type="miscellaneous discrepancy">
        <sequence resource="EMBL-CDS" id="BAC98197"/>
    </conflict>
    <text>The sequence differs from that shown because it seems to be derived from a pre-mRNA.</text>
</comment>
<evidence type="ECO:0000250" key="1">
    <source>
        <dbReference type="UniProtKB" id="Q63625"/>
    </source>
</evidence>
<evidence type="ECO:0000250" key="2">
    <source>
        <dbReference type="UniProtKB" id="Q9P1Y6"/>
    </source>
</evidence>
<evidence type="ECO:0000255" key="3"/>
<evidence type="ECO:0000255" key="4">
    <source>
        <dbReference type="PROSITE-ProRule" id="PRU00146"/>
    </source>
</evidence>
<evidence type="ECO:0000255" key="5">
    <source>
        <dbReference type="PROSITE-ProRule" id="PRU00175"/>
    </source>
</evidence>
<evidence type="ECO:0000256" key="6">
    <source>
        <dbReference type="SAM" id="MobiDB-lite"/>
    </source>
</evidence>
<evidence type="ECO:0000269" key="7">
    <source>
    </source>
</evidence>
<evidence type="ECO:0000303" key="8">
    <source>
    </source>
</evidence>
<evidence type="ECO:0000305" key="9"/>
<evidence type="ECO:0000312" key="10">
    <source>
        <dbReference type="EMBL" id="AAH94566.1"/>
    </source>
</evidence>
<evidence type="ECO:0000312" key="11">
    <source>
        <dbReference type="EMBL" id="AAI38447.1"/>
    </source>
</evidence>
<evidence type="ECO:0000312" key="12">
    <source>
        <dbReference type="EMBL" id="BAC98197.1"/>
    </source>
</evidence>
<evidence type="ECO:0000312" key="13">
    <source>
        <dbReference type="MGI" id="MGI:2141847"/>
    </source>
</evidence>
<evidence type="ECO:0007744" key="14">
    <source>
    </source>
</evidence>
<reference key="1">
    <citation type="journal article" date="2009" name="PLoS Biol.">
        <title>Lineage-specific biology revealed by a finished genome assembly of the mouse.</title>
        <authorList>
            <person name="Church D.M."/>
            <person name="Goodstadt L."/>
            <person name="Hillier L.W."/>
            <person name="Zody M.C."/>
            <person name="Goldstein S."/>
            <person name="She X."/>
            <person name="Bult C.J."/>
            <person name="Agarwala R."/>
            <person name="Cherry J.L."/>
            <person name="DiCuccio M."/>
            <person name="Hlavina W."/>
            <person name="Kapustin Y."/>
            <person name="Meric P."/>
            <person name="Maglott D."/>
            <person name="Birtle Z."/>
            <person name="Marques A.C."/>
            <person name="Graves T."/>
            <person name="Zhou S."/>
            <person name="Teague B."/>
            <person name="Potamousis K."/>
            <person name="Churas C."/>
            <person name="Place M."/>
            <person name="Herschleb J."/>
            <person name="Runnheim R."/>
            <person name="Forrest D."/>
            <person name="Amos-Landgraf J."/>
            <person name="Schwartz D.C."/>
            <person name="Cheng Z."/>
            <person name="Lindblad-Toh K."/>
            <person name="Eichler E.E."/>
            <person name="Ponting C.P."/>
        </authorList>
    </citation>
    <scope>NUCLEOTIDE SEQUENCE [LARGE SCALE GENOMIC DNA]</scope>
    <source>
        <strain>C57BL/6J</strain>
    </source>
</reference>
<reference evidence="9 11" key="2">
    <citation type="journal article" date="2004" name="Genome Res.">
        <title>The status, quality, and expansion of the NIH full-length cDNA project: the Mammalian Gene Collection (MGC).</title>
        <authorList>
            <consortium name="The MGC Project Team"/>
        </authorList>
    </citation>
    <scope>NUCLEOTIDE SEQUENCE [LARGE SCALE MRNA] (ISOFORM 2)</scope>
    <scope>NUCLEOTIDE SEQUENCE [LARGE SCALE MRNA] OF 468-1682 (ISOFORMS 1/2)</scope>
    <source>
        <strain evidence="10">C57BL/6J</strain>
        <tissue evidence="10">Brain</tissue>
    </source>
</reference>
<reference evidence="9 12" key="3">
    <citation type="journal article" date="2003" name="DNA Res.">
        <title>Prediction of the coding sequences of mouse homologues of KIAA gene: III. The complete nucleotide sequences of 500 mouse KIAA-homologous cDNAs identified by screening of terminal sequences of cDNA clones randomly sampled from size-fractionated libraries.</title>
        <authorList>
            <person name="Okazaki N."/>
            <person name="Kikuno R."/>
            <person name="Ohara R."/>
            <person name="Inamoto S."/>
            <person name="Koseki H."/>
            <person name="Hiraoka S."/>
            <person name="Saga Y."/>
            <person name="Nagase T."/>
            <person name="Ohara O."/>
            <person name="Koga H."/>
        </authorList>
    </citation>
    <scope>NUCLEOTIDE SEQUENCE [LARGE SCALE MRNA] OF 539-1430 (ISOFORMS 1/2)</scope>
    <source>
        <tissue evidence="12">Embryonic tail</tissue>
    </source>
</reference>
<reference key="4">
    <citation type="journal article" date="2010" name="Cell">
        <title>A tissue-specific atlas of mouse protein phosphorylation and expression.</title>
        <authorList>
            <person name="Huttlin E.L."/>
            <person name="Jedrychowski M.P."/>
            <person name="Elias J.E."/>
            <person name="Goswami T."/>
            <person name="Rad R."/>
            <person name="Beausoleil S.A."/>
            <person name="Villen J."/>
            <person name="Haas W."/>
            <person name="Sowa M.E."/>
            <person name="Gygi S.P."/>
        </authorList>
    </citation>
    <scope>PHOSPHORYLATION [LARGE SCALE ANALYSIS] AT SER-919</scope>
    <scope>IDENTIFICATION BY MASS SPECTROMETRY [LARGE SCALE ANALYSIS]</scope>
    <source>
        <tissue>Kidney</tissue>
        <tissue>Pancreas</tissue>
        <tissue>Spleen</tissue>
        <tissue>Testis</tissue>
    </source>
</reference>
<accession>A6H619</accession>
<accession>Q505G1</accession>
<accession>Q6ZPN4</accession>
<protein>
    <recommendedName>
        <fullName evidence="13">PHD and RING finger domain-containing protein 1</fullName>
    </recommendedName>
</protein>
<gene>
    <name evidence="13" type="primary">Phrf1</name>
    <name type="synonym">Kiaa1542</name>
</gene>
<proteinExistence type="evidence at protein level"/>
<organism>
    <name type="scientific">Mus musculus</name>
    <name type="common">Mouse</name>
    <dbReference type="NCBI Taxonomy" id="10090"/>
    <lineage>
        <taxon>Eukaryota</taxon>
        <taxon>Metazoa</taxon>
        <taxon>Chordata</taxon>
        <taxon>Craniata</taxon>
        <taxon>Vertebrata</taxon>
        <taxon>Euteleostomi</taxon>
        <taxon>Mammalia</taxon>
        <taxon>Eutheria</taxon>
        <taxon>Euarchontoglires</taxon>
        <taxon>Glires</taxon>
        <taxon>Rodentia</taxon>
        <taxon>Myomorpha</taxon>
        <taxon>Muroidea</taxon>
        <taxon>Muridae</taxon>
        <taxon>Murinae</taxon>
        <taxon>Mus</taxon>
        <taxon>Mus</taxon>
    </lineage>
</organism>
<keyword id="KW-0025">Alternative splicing</keyword>
<keyword id="KW-0175">Coiled coil</keyword>
<keyword id="KW-0479">Metal-binding</keyword>
<keyword id="KW-0597">Phosphoprotein</keyword>
<keyword id="KW-1185">Reference proteome</keyword>
<keyword id="KW-0862">Zinc</keyword>
<keyword id="KW-0863">Zinc-finger</keyword>